<accession>D5VRB9</accession>
<dbReference type="EC" id="2.3.1.311" evidence="5"/>
<dbReference type="EMBL" id="CP002009">
    <property type="protein sequence ID" value="ADG13122.1"/>
    <property type="molecule type" value="Genomic_DNA"/>
</dbReference>
<dbReference type="RefSeq" id="WP_013099868.1">
    <property type="nucleotide sequence ID" value="NC_014122.1"/>
</dbReference>
<dbReference type="PDB" id="6IA8">
    <property type="method" value="X-ray"/>
    <property type="resolution" value="1.90 A"/>
    <property type="chains" value="A=21-534"/>
</dbReference>
<dbReference type="PDB" id="6IAD">
    <property type="method" value="X-ray"/>
    <property type="resolution" value="2.05 A"/>
    <property type="chains" value="A=55-534"/>
</dbReference>
<dbReference type="PDB" id="6IAZ">
    <property type="method" value="X-ray"/>
    <property type="resolution" value="1.90 A"/>
    <property type="chains" value="A=47-534"/>
</dbReference>
<dbReference type="PDBsum" id="6IA8"/>
<dbReference type="PDBsum" id="6IAD"/>
<dbReference type="PDBsum" id="6IAZ"/>
<dbReference type="SMR" id="D5VRB9"/>
<dbReference type="STRING" id="573063.Metin_0452"/>
<dbReference type="GeneID" id="9131457"/>
<dbReference type="KEGG" id="mif:Metin_0452"/>
<dbReference type="eggNOG" id="arCOG01361">
    <property type="taxonomic scope" value="Archaea"/>
</dbReference>
<dbReference type="HOGENOM" id="CLU_025983_2_1_2"/>
<dbReference type="OrthoDB" id="49957at2157"/>
<dbReference type="Proteomes" id="UP000002061">
    <property type="component" value="Chromosome"/>
</dbReference>
<dbReference type="GO" id="GO:0005737">
    <property type="term" value="C:cytoplasm"/>
    <property type="evidence" value="ECO:0007669"/>
    <property type="project" value="TreeGrafter"/>
</dbReference>
<dbReference type="GO" id="GO:0051539">
    <property type="term" value="F:4 iron, 4 sulfur cluster binding"/>
    <property type="evidence" value="ECO:0007669"/>
    <property type="project" value="UniProtKB-KW"/>
</dbReference>
<dbReference type="GO" id="GO:0046872">
    <property type="term" value="F:metal ion binding"/>
    <property type="evidence" value="ECO:0007669"/>
    <property type="project" value="UniProtKB-KW"/>
</dbReference>
<dbReference type="GO" id="GO:1904047">
    <property type="term" value="F:S-adenosyl-L-methionine binding"/>
    <property type="evidence" value="ECO:0000314"/>
    <property type="project" value="UniProtKB"/>
</dbReference>
<dbReference type="GO" id="GO:0000049">
    <property type="term" value="F:tRNA binding"/>
    <property type="evidence" value="ECO:0007669"/>
    <property type="project" value="UniProtKB-KW"/>
</dbReference>
<dbReference type="GO" id="GO:0106261">
    <property type="term" value="F:tRNA uridine(34) acetyltransferase activity"/>
    <property type="evidence" value="ECO:0000314"/>
    <property type="project" value="UniProtKB"/>
</dbReference>
<dbReference type="GO" id="GO:0051391">
    <property type="term" value="P:tRNA acetylation"/>
    <property type="evidence" value="ECO:0000314"/>
    <property type="project" value="UniProtKB"/>
</dbReference>
<dbReference type="GO" id="GO:0002926">
    <property type="term" value="P:tRNA wobble base 5-methoxycarbonylmethyl-2-thiouridinylation"/>
    <property type="evidence" value="ECO:0007669"/>
    <property type="project" value="TreeGrafter"/>
</dbReference>
<dbReference type="GO" id="GO:0002098">
    <property type="term" value="P:tRNA wobble uridine modification"/>
    <property type="evidence" value="ECO:0000314"/>
    <property type="project" value="UniProtKB"/>
</dbReference>
<dbReference type="CDD" id="cd01335">
    <property type="entry name" value="Radical_SAM"/>
    <property type="match status" value="1"/>
</dbReference>
<dbReference type="FunFam" id="3.20.20.70:FF:000388">
    <property type="entry name" value="Histone acetyltransferase Elp3 homolog"/>
    <property type="match status" value="1"/>
</dbReference>
<dbReference type="Gene3D" id="3.40.630.30">
    <property type="match status" value="1"/>
</dbReference>
<dbReference type="Gene3D" id="3.20.20.70">
    <property type="entry name" value="Aldolase class I"/>
    <property type="match status" value="1"/>
</dbReference>
<dbReference type="InterPro" id="IPR016181">
    <property type="entry name" value="Acyl_CoA_acyltransferase"/>
</dbReference>
<dbReference type="InterPro" id="IPR013785">
    <property type="entry name" value="Aldolase_TIM"/>
</dbReference>
<dbReference type="InterPro" id="IPR039661">
    <property type="entry name" value="ELP3"/>
</dbReference>
<dbReference type="InterPro" id="IPR034687">
    <property type="entry name" value="ELP3-like"/>
</dbReference>
<dbReference type="InterPro" id="IPR056591">
    <property type="entry name" value="ELP3-like_N"/>
</dbReference>
<dbReference type="InterPro" id="IPR006638">
    <property type="entry name" value="Elp3/MiaA/NifB-like_rSAM"/>
</dbReference>
<dbReference type="InterPro" id="IPR000182">
    <property type="entry name" value="GNAT_dom"/>
</dbReference>
<dbReference type="InterPro" id="IPR032432">
    <property type="entry name" value="Radical_SAM_C"/>
</dbReference>
<dbReference type="InterPro" id="IPR007197">
    <property type="entry name" value="rSAM"/>
</dbReference>
<dbReference type="NCBIfam" id="TIGR01211">
    <property type="entry name" value="ELP3"/>
    <property type="match status" value="1"/>
</dbReference>
<dbReference type="PANTHER" id="PTHR11135">
    <property type="entry name" value="HISTONE ACETYLTRANSFERASE-RELATED"/>
    <property type="match status" value="1"/>
</dbReference>
<dbReference type="PANTHER" id="PTHR11135:SF7">
    <property type="entry name" value="TRNA URIDINE(34) ACETYLTRANSFERASE"/>
    <property type="match status" value="1"/>
</dbReference>
<dbReference type="Pfam" id="PF00583">
    <property type="entry name" value="Acetyltransf_1"/>
    <property type="match status" value="1"/>
</dbReference>
<dbReference type="Pfam" id="PF23613">
    <property type="entry name" value="ELP3_N"/>
    <property type="match status" value="1"/>
</dbReference>
<dbReference type="Pfam" id="PF04055">
    <property type="entry name" value="Radical_SAM"/>
    <property type="match status" value="1"/>
</dbReference>
<dbReference type="Pfam" id="PF16199">
    <property type="entry name" value="Radical_SAM_C"/>
    <property type="match status" value="1"/>
</dbReference>
<dbReference type="PIRSF" id="PIRSF005669">
    <property type="entry name" value="Hist_AcTrfase_ELP3"/>
    <property type="match status" value="1"/>
</dbReference>
<dbReference type="SFLD" id="SFLDF00344">
    <property type="entry name" value="ELP3-like"/>
    <property type="match status" value="1"/>
</dbReference>
<dbReference type="SFLD" id="SFLDS00029">
    <property type="entry name" value="Radical_SAM"/>
    <property type="match status" value="1"/>
</dbReference>
<dbReference type="SMART" id="SM00729">
    <property type="entry name" value="Elp3"/>
    <property type="match status" value="1"/>
</dbReference>
<dbReference type="SUPFAM" id="SSF55729">
    <property type="entry name" value="Acyl-CoA N-acyltransferases (Nat)"/>
    <property type="match status" value="1"/>
</dbReference>
<dbReference type="SUPFAM" id="SSF102114">
    <property type="entry name" value="Radical SAM enzymes"/>
    <property type="match status" value="1"/>
</dbReference>
<dbReference type="PROSITE" id="PS51186">
    <property type="entry name" value="GNAT"/>
    <property type="match status" value="1"/>
</dbReference>
<dbReference type="PROSITE" id="PS51918">
    <property type="entry name" value="RADICAL_SAM"/>
    <property type="match status" value="1"/>
</dbReference>
<organism>
    <name type="scientific">Methanocaldococcus infernus (strain DSM 11812 / JCM 15783 / ME)</name>
    <dbReference type="NCBI Taxonomy" id="573063"/>
    <lineage>
        <taxon>Archaea</taxon>
        <taxon>Methanobacteriati</taxon>
        <taxon>Methanobacteriota</taxon>
        <taxon>Methanomada group</taxon>
        <taxon>Methanococci</taxon>
        <taxon>Methanococcales</taxon>
        <taxon>Methanocaldococcaceae</taxon>
        <taxon>Methanocaldococcus</taxon>
    </lineage>
</organism>
<feature type="chain" id="PRO_0000447989" description="tRNA uridine(34) acetyltransferase">
    <location>
        <begin position="1"/>
        <end position="534"/>
    </location>
</feature>
<feature type="domain" description="Radical SAM core" evidence="4">
    <location>
        <begin position="73"/>
        <end position="344"/>
    </location>
</feature>
<feature type="domain" description="N-acetyltransferase" evidence="3">
    <location>
        <begin position="387"/>
        <end position="534"/>
    </location>
</feature>
<feature type="region of interest" description="Radical S-adenosyl-L-methionine (rSAM)" evidence="7">
    <location>
        <begin position="70"/>
        <end position="330"/>
    </location>
</feature>
<feature type="binding site" evidence="2">
    <location>
        <position position="90"/>
    </location>
    <ligand>
        <name>[4Fe-4S] cluster</name>
        <dbReference type="ChEBI" id="CHEBI:49883"/>
        <note>4Fe-4S-S-AdoMet</note>
    </ligand>
</feature>
<feature type="binding site" evidence="1">
    <location>
        <position position="95"/>
    </location>
    <ligand>
        <name>[4Fe-4S] cluster</name>
        <dbReference type="ChEBI" id="CHEBI:49883"/>
        <note>4Fe-4S-S-AdoMet</note>
    </ligand>
</feature>
<feature type="binding site" evidence="1">
    <location>
        <position position="98"/>
    </location>
    <ligand>
        <name>[4Fe-4S] cluster</name>
        <dbReference type="ChEBI" id="CHEBI:49883"/>
        <note>4Fe-4S-S-AdoMet</note>
    </ligand>
</feature>
<feature type="binding site" evidence="1">
    <location>
        <position position="150"/>
    </location>
    <ligand>
        <name>acetyl-CoA</name>
        <dbReference type="ChEBI" id="CHEBI:57288"/>
    </ligand>
</feature>
<feature type="binding site" evidence="1">
    <location>
        <begin position="461"/>
        <end position="464"/>
    </location>
    <ligand>
        <name>acetyl-CoA</name>
        <dbReference type="ChEBI" id="CHEBI:57288"/>
    </ligand>
</feature>
<feature type="binding site" evidence="1">
    <location>
        <begin position="485"/>
        <end position="487"/>
    </location>
    <ligand>
        <name>acetyl-CoA</name>
        <dbReference type="ChEBI" id="CHEBI:57288"/>
    </ligand>
</feature>
<feature type="binding site" evidence="1">
    <location>
        <position position="518"/>
    </location>
    <ligand>
        <name>acetyl-CoA</name>
        <dbReference type="ChEBI" id="CHEBI:57288"/>
    </ligand>
</feature>
<feature type="disulfide bond" evidence="6 11 12 13">
    <location>
        <begin position="384"/>
        <end position="389"/>
    </location>
</feature>
<feature type="mutagenesis site" description="Abolished tRNA uridine(34) acetyltransferase activity." evidence="5">
    <original>CIFC</original>
    <variation>SIFS</variation>
    <location>
        <begin position="95"/>
        <end position="98"/>
    </location>
</feature>
<feature type="mutagenesis site" description="Strongly reduced tRNA acetyl-coA hydrolase activity." evidence="6">
    <original>K</original>
    <variation>A</variation>
    <location>
        <position position="150"/>
    </location>
</feature>
<feature type="mutagenesis site" description="Strongly reduced tRNA acetyl-coA hydrolase activity." evidence="6">
    <original>K</original>
    <variation>A</variation>
    <location>
        <position position="266"/>
    </location>
</feature>
<feature type="mutagenesis site" description="Strongly reduced tRNA acetyl-coA hydrolase activity." evidence="6">
    <original>Q</original>
    <variation>A</variation>
    <location>
        <position position="461"/>
    </location>
</feature>
<feature type="mutagenesis site" description="Does not affect tRNA acetyl-coA hydrolase activity." evidence="6">
    <original>H</original>
    <variation>A</variation>
    <location>
        <position position="463"/>
    </location>
</feature>
<feature type="mutagenesis site" description="Abolished tRNA uridine(34) acetyltransferase activity." evidence="5 6">
    <original>Y</original>
    <variation>A</variation>
    <location>
        <position position="517"/>
    </location>
</feature>
<feature type="strand" evidence="14">
    <location>
        <begin position="75"/>
        <end position="84"/>
    </location>
</feature>
<feature type="helix" evidence="14">
    <location>
        <begin position="124"/>
        <end position="126"/>
    </location>
</feature>
<feature type="helix" evidence="14">
    <location>
        <begin position="130"/>
        <end position="143"/>
    </location>
</feature>
<feature type="strand" evidence="14">
    <location>
        <begin position="149"/>
        <end position="158"/>
    </location>
</feature>
<feature type="helix" evidence="14">
    <location>
        <begin position="160"/>
        <end position="162"/>
    </location>
</feature>
<feature type="helix" evidence="14">
    <location>
        <begin position="165"/>
        <end position="180"/>
    </location>
</feature>
<feature type="helix" evidence="14">
    <location>
        <begin position="187"/>
        <end position="194"/>
    </location>
</feature>
<feature type="strand" evidence="14">
    <location>
        <begin position="197"/>
        <end position="208"/>
    </location>
</feature>
<feature type="helix" evidence="14">
    <location>
        <begin position="210"/>
        <end position="212"/>
    </location>
</feature>
<feature type="helix" evidence="14">
    <location>
        <begin position="215"/>
        <end position="224"/>
    </location>
</feature>
<feature type="strand" evidence="14">
    <location>
        <begin position="228"/>
        <end position="234"/>
    </location>
</feature>
<feature type="helix" evidence="14">
    <location>
        <begin position="238"/>
        <end position="243"/>
    </location>
</feature>
<feature type="helix" evidence="14">
    <location>
        <begin position="250"/>
        <end position="261"/>
    </location>
</feature>
<feature type="turn" evidence="14">
    <location>
        <begin position="262"/>
        <end position="264"/>
    </location>
</feature>
<feature type="strand" evidence="14">
    <location>
        <begin position="266"/>
        <end position="271"/>
    </location>
</feature>
<feature type="helix" evidence="14">
    <location>
        <begin position="280"/>
        <end position="292"/>
    </location>
</feature>
<feature type="strand" evidence="14">
    <location>
        <begin position="299"/>
        <end position="303"/>
    </location>
</feature>
<feature type="helix" evidence="14">
    <location>
        <begin position="313"/>
        <end position="319"/>
    </location>
</feature>
<feature type="helix" evidence="14">
    <location>
        <begin position="328"/>
        <end position="341"/>
    </location>
</feature>
<feature type="helix" evidence="14">
    <location>
        <begin position="357"/>
        <end position="359"/>
    </location>
</feature>
<feature type="strand" evidence="14">
    <location>
        <begin position="360"/>
        <end position="363"/>
    </location>
</feature>
<feature type="helix" evidence="14">
    <location>
        <begin position="369"/>
        <end position="380"/>
    </location>
</feature>
<feature type="helix" evidence="14">
    <location>
        <begin position="387"/>
        <end position="390"/>
    </location>
</feature>
<feature type="helix" evidence="14">
    <location>
        <begin position="392"/>
        <end position="399"/>
    </location>
</feature>
<feature type="helix" evidence="14">
    <location>
        <begin position="405"/>
        <end position="407"/>
    </location>
</feature>
<feature type="strand" evidence="14">
    <location>
        <begin position="408"/>
        <end position="417"/>
    </location>
</feature>
<feature type="strand" evidence="14">
    <location>
        <begin position="420"/>
        <end position="429"/>
    </location>
</feature>
<feature type="turn" evidence="14">
    <location>
        <begin position="430"/>
        <end position="433"/>
    </location>
</feature>
<feature type="strand" evidence="14">
    <location>
        <begin position="434"/>
        <end position="443"/>
    </location>
</feature>
<feature type="strand" evidence="14">
    <location>
        <begin position="456"/>
        <end position="464"/>
    </location>
</feature>
<feature type="strand" evidence="15">
    <location>
        <begin position="468"/>
        <end position="470"/>
    </location>
</feature>
<feature type="strand" evidence="14">
    <location>
        <begin position="473"/>
        <end position="475"/>
    </location>
</feature>
<feature type="strand" evidence="15">
    <location>
        <begin position="481"/>
        <end position="484"/>
    </location>
</feature>
<feature type="helix" evidence="14">
    <location>
        <begin position="485"/>
        <end position="499"/>
    </location>
</feature>
<feature type="strand" evidence="14">
    <location>
        <begin position="504"/>
        <end position="508"/>
    </location>
</feature>
<feature type="helix" evidence="14">
    <location>
        <begin position="512"/>
        <end position="514"/>
    </location>
</feature>
<feature type="helix" evidence="14">
    <location>
        <begin position="515"/>
        <end position="520"/>
    </location>
</feature>
<feature type="strand" evidence="14">
    <location>
        <begin position="524"/>
        <end position="526"/>
    </location>
</feature>
<feature type="strand" evidence="14">
    <location>
        <begin position="529"/>
        <end position="533"/>
    </location>
</feature>
<keyword id="KW-0002">3D-structure</keyword>
<keyword id="KW-0004">4Fe-4S</keyword>
<keyword id="KW-0012">Acyltransferase</keyword>
<keyword id="KW-1015">Disulfide bond</keyword>
<keyword id="KW-0408">Iron</keyword>
<keyword id="KW-0411">Iron-sulfur</keyword>
<keyword id="KW-0479">Metal-binding</keyword>
<keyword id="KW-0694">RNA-binding</keyword>
<keyword id="KW-0949">S-adenosyl-L-methionine</keyword>
<keyword id="KW-0808">Transferase</keyword>
<keyword id="KW-0819">tRNA processing</keyword>
<keyword id="KW-0820">tRNA-binding</keyword>
<evidence type="ECO:0000250" key="1">
    <source>
        <dbReference type="UniProtKB" id="A0A1C7D1B7"/>
    </source>
</evidence>
<evidence type="ECO:0000250" key="2">
    <source>
        <dbReference type="UniProtKB" id="Q02908"/>
    </source>
</evidence>
<evidence type="ECO:0000255" key="3">
    <source>
        <dbReference type="PROSITE-ProRule" id="PRU00532"/>
    </source>
</evidence>
<evidence type="ECO:0000255" key="4">
    <source>
        <dbReference type="PROSITE-ProRule" id="PRU01266"/>
    </source>
</evidence>
<evidence type="ECO:0000269" key="5">
    <source>
    </source>
</evidence>
<evidence type="ECO:0000269" key="6">
    <source>
    </source>
</evidence>
<evidence type="ECO:0000303" key="7">
    <source>
    </source>
</evidence>
<evidence type="ECO:0000303" key="8">
    <source>
    </source>
</evidence>
<evidence type="ECO:0000305" key="9"/>
<evidence type="ECO:0000312" key="10">
    <source>
        <dbReference type="EMBL" id="ADG13122.1"/>
    </source>
</evidence>
<evidence type="ECO:0007744" key="11">
    <source>
        <dbReference type="PDB" id="6IA8"/>
    </source>
</evidence>
<evidence type="ECO:0007744" key="12">
    <source>
        <dbReference type="PDB" id="6IAD"/>
    </source>
</evidence>
<evidence type="ECO:0007744" key="13">
    <source>
        <dbReference type="PDB" id="6IAZ"/>
    </source>
</evidence>
<evidence type="ECO:0007829" key="14">
    <source>
        <dbReference type="PDB" id="6IA8"/>
    </source>
</evidence>
<evidence type="ECO:0007829" key="15">
    <source>
        <dbReference type="PDB" id="6IAD"/>
    </source>
</evidence>
<reference key="1">
    <citation type="submission" date="2010-04" db="EMBL/GenBank/DDBJ databases">
        <title>Complete sequence of Methanocaldococcus infernus ME.</title>
        <authorList>
            <consortium name="US DOE Joint Genome Institute"/>
            <person name="Lucas S."/>
            <person name="Copeland A."/>
            <person name="Lapidus A."/>
            <person name="Cheng J.-F."/>
            <person name="Bruce D."/>
            <person name="Goodwin L."/>
            <person name="Pitluck S."/>
            <person name="Munk A.C."/>
            <person name="Detter J.C."/>
            <person name="Han C."/>
            <person name="Tapia R."/>
            <person name="Land M."/>
            <person name="Hauser L."/>
            <person name="Kyrpides N."/>
            <person name="Mikhailova N."/>
            <person name="Sieprawska-Lupa M."/>
            <person name="Whitman W.B."/>
            <person name="Woyke T."/>
        </authorList>
    </citation>
    <scope>NUCLEOTIDE SEQUENCE [LARGE SCALE GENOMIC DNA]</scope>
    <source>
        <strain>DSM 11812 / JCM 15783 / ME</strain>
    </source>
</reference>
<reference key="2">
    <citation type="journal article" date="2014" name="Nat. Chem. Biol.">
        <title>Archaeal Elp3 catalyzes tRNA wobble uridine modification at C5 via a radical mechanism.</title>
        <authorList>
            <person name="Selvadurai K."/>
            <person name="Wang P."/>
            <person name="Seimetz J."/>
            <person name="Huang R.H."/>
        </authorList>
    </citation>
    <scope>FUNCTION</scope>
    <scope>CATALYTIC ACTIVITY</scope>
    <scope>PATHWAY</scope>
    <scope>MUTAGENESIS OF 95-CYS--CYS-98 AND TYR-517</scope>
</reference>
<reference evidence="11 12 13" key="3">
    <citation type="journal article" date="2019" name="Nat. Commun.">
        <title>The Elongator subunit Elp3 is a non-canonical tRNA acetyltransferase.</title>
        <authorList>
            <person name="Lin T.Y."/>
            <person name="Abbassi N.E.H."/>
            <person name="Zakrzewski K."/>
            <person name="Chramiec-Glabik A."/>
            <person name="Jemiola-Rzeminska M."/>
            <person name="Rozycki J."/>
            <person name="Glatt S."/>
        </authorList>
    </citation>
    <scope>X-RAY CRYSTALLOGRAPHY (1.90 ANGSTROMS) OF 47-534</scope>
    <scope>FUNCTION</scope>
    <scope>PATHWAY</scope>
    <scope>DISULFIDE BONDS</scope>
    <scope>MUTAGENESIS OF LYS-150; LYS-266; GLN-461; HIS-463 AND TYR-517</scope>
</reference>
<name>ELP3_METIM</name>
<sequence>MKEKLMRCIIERILKEYKEGKTLDKKRIEQIKSECLRIYRIGIGHPSNSEILKYATEEEKKILIPILRKKPVRTISGVAVVAVMTSPAKCPHGKCIFCPGGLDSVFGDVPQSYTGREPATMRGLMFNFDPYLQTRARIEQLEKVGHPTDKIELIIMGGTFPAREIEYQDWFIKRCLDAMNERESKSLEEAQKINETAKHRCVALCIETRPDYCSEKEINQMLKLGATRVELGVQSIYNEILKLCKRGHSVEDTIKATQLLKDSGLKVSYHLMPGMPGSSIEMDKKMFKEIFTNPDFMPDMVKIYPCLVIEGTELYEMWKRGEFKPYREEEAIEVISYAKSIMPKWVRTSRIQRDIPATVIVDGVKKSNLGELVYKYMEKKGLRCRCIRCREVGHVYYKKGILPDPEHIKLVREDYEASGGTEIFLSFEDVKNDILIAFLRLRDPYKPFRKEIDDKTMLVRQLHVFGWEKALTRDIKEVSWQHMGYGRMLMKEAERIAKEEFGKKKILVTSGIGVREYYRKLGYKRVGAYMGKEL</sequence>
<comment type="function">
    <text evidence="5 6">tRNA uridine(34) acetyltransferase, which mediates formation of carboxymethyluridine in the wobble base at position 34 in tRNAs (PubMed:25151136, PubMed:30733442). The proposed mechanism is the following: (i) recruits S-adenosyl-L-methionine and cleaves it to generate a 5'-deoxyadenosine radical (5'-dA) in the radical S-adenosyl-L-methionine (rSAM) region, (ii) hydrolyzes acetyl-CoA in the N-acetyltransferase domain and (iii) an acetyl radical is formed by the products of the two domains and (iv) is transferred onto the C5 position of uridine(34) in the bound tRNA molecule (PubMed:25151136). Does not show protein lysine acetyltransferase activity (PubMed:30733442).</text>
</comment>
<comment type="catalytic activity">
    <reaction evidence="5">
        <text>uridine(34) in tRNA + acetyl-CoA + S-adenosyl-L-methionine + H2O = 5-(carboxymethyl)uridine(34) in tRNA + 5'-deoxyadenosine + L-methionine + CoA + 2 H(+)</text>
        <dbReference type="Rhea" id="RHEA:61020"/>
        <dbReference type="Rhea" id="RHEA-COMP:10407"/>
        <dbReference type="Rhea" id="RHEA-COMP:11727"/>
        <dbReference type="ChEBI" id="CHEBI:15377"/>
        <dbReference type="ChEBI" id="CHEBI:15378"/>
        <dbReference type="ChEBI" id="CHEBI:17319"/>
        <dbReference type="ChEBI" id="CHEBI:57287"/>
        <dbReference type="ChEBI" id="CHEBI:57288"/>
        <dbReference type="ChEBI" id="CHEBI:57844"/>
        <dbReference type="ChEBI" id="CHEBI:59789"/>
        <dbReference type="ChEBI" id="CHEBI:65315"/>
        <dbReference type="ChEBI" id="CHEBI:74882"/>
        <dbReference type="EC" id="2.3.1.311"/>
    </reaction>
    <physiologicalReaction direction="left-to-right" evidence="5">
        <dbReference type="Rhea" id="RHEA:61021"/>
    </physiologicalReaction>
</comment>
<comment type="cofactor">
    <cofactor>
        <name>[4Fe-4S] cluster</name>
        <dbReference type="ChEBI" id="CHEBI:49883"/>
    </cofactor>
    <text evidence="2">Binds 1 [4Fe-4S] cluster. The cluster is coordinated with 3 cysteines and an exchangeable S-adenosyl-L-methionine.</text>
</comment>
<comment type="pathway">
    <text evidence="5 6">tRNA modification.</text>
</comment>
<comment type="similarity">
    <text evidence="9">Belongs to the ELP3 family.</text>
</comment>
<protein>
    <recommendedName>
        <fullName evidence="9">tRNA uridine(34) acetyltransferase</fullName>
        <ecNumber evidence="5">2.3.1.311</ecNumber>
    </recommendedName>
    <alternativeName>
        <fullName evidence="8">Elongator complex protein 3 homolog</fullName>
        <shortName evidence="8">MinElp3</shortName>
    </alternativeName>
</protein>
<proteinExistence type="evidence at protein level"/>
<gene>
    <name evidence="10" type="ordered locus">Metin_0452</name>
</gene>